<organism>
    <name type="scientific">Escherichia coli O157:H7</name>
    <dbReference type="NCBI Taxonomy" id="83334"/>
    <lineage>
        <taxon>Bacteria</taxon>
        <taxon>Pseudomonadati</taxon>
        <taxon>Pseudomonadota</taxon>
        <taxon>Gammaproteobacteria</taxon>
        <taxon>Enterobacterales</taxon>
        <taxon>Enterobacteriaceae</taxon>
        <taxon>Escherichia</taxon>
    </lineage>
</organism>
<keyword id="KW-0963">Cytoplasm</keyword>
<keyword id="KW-0235">DNA replication</keyword>
<keyword id="KW-0238">DNA-binding</keyword>
<keyword id="KW-0239">DNA-directed DNA polymerase</keyword>
<keyword id="KW-0548">Nucleotidyltransferase</keyword>
<keyword id="KW-1185">Reference proteome</keyword>
<keyword id="KW-0808">Transferase</keyword>
<accession>P0A990</accession>
<accession>P00583</accession>
<reference key="1">
    <citation type="journal article" date="2001" name="Nature">
        <title>Genome sequence of enterohaemorrhagic Escherichia coli O157:H7.</title>
        <authorList>
            <person name="Perna N.T."/>
            <person name="Plunkett G. III"/>
            <person name="Burland V."/>
            <person name="Mau B."/>
            <person name="Glasner J.D."/>
            <person name="Rose D.J."/>
            <person name="Mayhew G.F."/>
            <person name="Evans P.S."/>
            <person name="Gregor J."/>
            <person name="Kirkpatrick H.A."/>
            <person name="Posfai G."/>
            <person name="Hackett J."/>
            <person name="Klink S."/>
            <person name="Boutin A."/>
            <person name="Shao Y."/>
            <person name="Miller L."/>
            <person name="Grotbeck E.J."/>
            <person name="Davis N.W."/>
            <person name="Lim A."/>
            <person name="Dimalanta E.T."/>
            <person name="Potamousis K."/>
            <person name="Apodaca J."/>
            <person name="Anantharaman T.S."/>
            <person name="Lin J."/>
            <person name="Yen G."/>
            <person name="Schwartz D.C."/>
            <person name="Welch R.A."/>
            <person name="Blattner F.R."/>
        </authorList>
    </citation>
    <scope>NUCLEOTIDE SEQUENCE [LARGE SCALE GENOMIC DNA]</scope>
    <source>
        <strain>O157:H7 / EDL933 / ATCC 700927 / EHEC</strain>
    </source>
</reference>
<reference key="2">
    <citation type="journal article" date="2001" name="DNA Res.">
        <title>Complete genome sequence of enterohemorrhagic Escherichia coli O157:H7 and genomic comparison with a laboratory strain K-12.</title>
        <authorList>
            <person name="Hayashi T."/>
            <person name="Makino K."/>
            <person name="Ohnishi M."/>
            <person name="Kurokawa K."/>
            <person name="Ishii K."/>
            <person name="Yokoyama K."/>
            <person name="Han C.-G."/>
            <person name="Ohtsubo E."/>
            <person name="Nakayama K."/>
            <person name="Murata T."/>
            <person name="Tanaka M."/>
            <person name="Tobe T."/>
            <person name="Iida T."/>
            <person name="Takami H."/>
            <person name="Honda T."/>
            <person name="Sasakawa C."/>
            <person name="Ogasawara N."/>
            <person name="Yasunaga T."/>
            <person name="Kuhara S."/>
            <person name="Shiba T."/>
            <person name="Hattori M."/>
            <person name="Shinagawa H."/>
        </authorList>
    </citation>
    <scope>NUCLEOTIDE SEQUENCE [LARGE SCALE GENOMIC DNA]</scope>
    <source>
        <strain>O157:H7 / Sakai / RIMD 0509952 / EHEC</strain>
    </source>
</reference>
<name>DPO3B_ECO57</name>
<comment type="function">
    <text evidence="2">Confers DNA tethering and processivity to DNA polymerases and other proteins. Acts as a clamp, forming a ring around DNA (a reaction catalyzed by the clamp-loading complex) which diffuses in an ATP-independent manner freely and bidirectionally along dsDNA. Initially characterized for its ability to contact the catalytic subunit of DNA polymerase III (Pol III), a complex, multichain enzyme responsible for most of the replicative synthesis in bacteria; Pol III exhibits 3'-5' exonuclease proofreading activity. The beta chain is required for initiation of replication as well as for processivity of DNA replication.</text>
</comment>
<comment type="subunit">
    <text evidence="2">Forms a ring-shaped head-to-tail homodimer around DNA which binds and tethers DNA polymerases and other proteins to the DNA. The DNA replisome complex has a single clamp-loading complex (3 tau and 1 each of delta, delta', psi and chi subunits) which binds 3 Pol III cores (1 core on the leading strand and 2 on the lagging strand) each with a beta sliding clamp dimer. Additional proteins in the replisome are other copies of gamma, psi and chi, Ssb, DNA helicase and RNA primase.</text>
</comment>
<comment type="subcellular location">
    <subcellularLocation>
        <location evidence="2">Cytoplasm</location>
    </subcellularLocation>
</comment>
<comment type="similarity">
    <text evidence="3">Belongs to the beta sliding clamp family.</text>
</comment>
<feature type="chain" id="PRO_0000105435" description="Beta sliding clamp">
    <location>
        <begin position="1"/>
        <end position="366"/>
    </location>
</feature>
<feature type="region of interest" description="I" evidence="1">
    <location>
        <begin position="1"/>
        <end position="125"/>
    </location>
</feature>
<feature type="region of interest" description="II" evidence="1">
    <location>
        <begin position="126"/>
        <end position="253"/>
    </location>
</feature>
<feature type="region of interest" description="III" evidence="1">
    <location>
        <begin position="254"/>
        <end position="366"/>
    </location>
</feature>
<evidence type="ECO:0000250" key="1"/>
<evidence type="ECO:0000250" key="2">
    <source>
        <dbReference type="UniProtKB" id="P0A988"/>
    </source>
</evidence>
<evidence type="ECO:0000305" key="3"/>
<sequence>MKFTVEREHLLKPLQQVSGPLGGRPTLPILGNLLLQVADGTLSLTGTDLEMEMVARVALVQPHEPGATTVPARKFFDICRGLPEGAEIAVQLEGERMLVRSGRSRFSLSTLPAADFPNLDDWQSEVEFTLPQATMKRLIEATQFSMAHQDVRYYLNGMLFETEGEELRTVATDGHRLAVCSMPIGQSLPSHSVIVPRKGVIELMRMLDGGDNPLRVQIGSNNIRAHVGDFIFTSKLVDGRFPDYRRVLPKNPDKHLEAGCDLLKQAFARAAILSNEKFRGVRLYVSENQLKITANNPEQEEAEEILDVTYSGAEMEIGFNVSYVLDVLNALKCENVRMMLTDSVSSVQIEDAASQSAAYVVMPMRL</sequence>
<protein>
    <recommendedName>
        <fullName>Beta sliding clamp</fullName>
        <shortName>Beta clamp</shortName>
        <shortName>Sliding clamp</shortName>
    </recommendedName>
    <alternativeName>
        <fullName>Beta-clamp processivity factor</fullName>
    </alternativeName>
    <alternativeName>
        <fullName>DNA polymerase III beta sliding clamp subunit</fullName>
    </alternativeName>
    <alternativeName>
        <fullName>DNA polymerase III subunit beta</fullName>
    </alternativeName>
</protein>
<gene>
    <name type="primary">dnaN</name>
    <name type="ordered locus">Z5192</name>
    <name type="ordered locus">ECs4636</name>
</gene>
<proteinExistence type="inferred from homology"/>
<dbReference type="EMBL" id="AE005174">
    <property type="protein sequence ID" value="AAG58898.1"/>
    <property type="molecule type" value="Genomic_DNA"/>
</dbReference>
<dbReference type="EMBL" id="BA000007">
    <property type="protein sequence ID" value="BAB38059.1"/>
    <property type="molecule type" value="Genomic_DNA"/>
</dbReference>
<dbReference type="PIR" id="D91208">
    <property type="entry name" value="D91208"/>
</dbReference>
<dbReference type="PIR" id="F86054">
    <property type="entry name" value="F86054"/>
</dbReference>
<dbReference type="RefSeq" id="NP_312663.1">
    <property type="nucleotide sequence ID" value="NC_002695.1"/>
</dbReference>
<dbReference type="RefSeq" id="WP_000673464.1">
    <property type="nucleotide sequence ID" value="NZ_VOAI01000011.1"/>
</dbReference>
<dbReference type="SMR" id="P0A990"/>
<dbReference type="STRING" id="155864.Z5192"/>
<dbReference type="GeneID" id="915391"/>
<dbReference type="GeneID" id="93778442"/>
<dbReference type="KEGG" id="ece:Z5192"/>
<dbReference type="KEGG" id="ecs:ECs_4636"/>
<dbReference type="PATRIC" id="fig|386585.9.peg.4846"/>
<dbReference type="eggNOG" id="COG0592">
    <property type="taxonomic scope" value="Bacteria"/>
</dbReference>
<dbReference type="HOGENOM" id="CLU_038149_4_2_6"/>
<dbReference type="OMA" id="YLIMPVR"/>
<dbReference type="Proteomes" id="UP000000558">
    <property type="component" value="Chromosome"/>
</dbReference>
<dbReference type="Proteomes" id="UP000002519">
    <property type="component" value="Chromosome"/>
</dbReference>
<dbReference type="GO" id="GO:0005737">
    <property type="term" value="C:cytoplasm"/>
    <property type="evidence" value="ECO:0007669"/>
    <property type="project" value="UniProtKB-SubCell"/>
</dbReference>
<dbReference type="GO" id="GO:0009360">
    <property type="term" value="C:DNA polymerase III complex"/>
    <property type="evidence" value="ECO:0007669"/>
    <property type="project" value="InterPro"/>
</dbReference>
<dbReference type="GO" id="GO:0008408">
    <property type="term" value="F:3'-5' exonuclease activity"/>
    <property type="evidence" value="ECO:0007669"/>
    <property type="project" value="InterPro"/>
</dbReference>
<dbReference type="GO" id="GO:0003677">
    <property type="term" value="F:DNA binding"/>
    <property type="evidence" value="ECO:0007669"/>
    <property type="project" value="UniProtKB-KW"/>
</dbReference>
<dbReference type="GO" id="GO:0003887">
    <property type="term" value="F:DNA-directed DNA polymerase activity"/>
    <property type="evidence" value="ECO:0007669"/>
    <property type="project" value="UniProtKB-KW"/>
</dbReference>
<dbReference type="GO" id="GO:0006271">
    <property type="term" value="P:DNA strand elongation involved in DNA replication"/>
    <property type="evidence" value="ECO:0007669"/>
    <property type="project" value="TreeGrafter"/>
</dbReference>
<dbReference type="CDD" id="cd00140">
    <property type="entry name" value="beta_clamp"/>
    <property type="match status" value="1"/>
</dbReference>
<dbReference type="FunFam" id="3.10.150.10:FF:000001">
    <property type="entry name" value="Beta sliding clamp"/>
    <property type="match status" value="1"/>
</dbReference>
<dbReference type="FunFam" id="3.10.150.10:FF:000002">
    <property type="entry name" value="Beta sliding clamp"/>
    <property type="match status" value="1"/>
</dbReference>
<dbReference type="FunFam" id="3.10.150.10:FF:000003">
    <property type="entry name" value="Beta sliding clamp"/>
    <property type="match status" value="1"/>
</dbReference>
<dbReference type="Gene3D" id="3.10.150.10">
    <property type="entry name" value="DNA Polymerase III, subunit A, domain 2"/>
    <property type="match status" value="3"/>
</dbReference>
<dbReference type="InterPro" id="IPR046938">
    <property type="entry name" value="DNA_clamp_sf"/>
</dbReference>
<dbReference type="InterPro" id="IPR001001">
    <property type="entry name" value="DNA_polIII_beta"/>
</dbReference>
<dbReference type="InterPro" id="IPR022635">
    <property type="entry name" value="DNA_polIII_beta_C"/>
</dbReference>
<dbReference type="InterPro" id="IPR022637">
    <property type="entry name" value="DNA_polIII_beta_cen"/>
</dbReference>
<dbReference type="InterPro" id="IPR022634">
    <property type="entry name" value="DNA_polIII_beta_N"/>
</dbReference>
<dbReference type="NCBIfam" id="TIGR00663">
    <property type="entry name" value="dnan"/>
    <property type="match status" value="1"/>
</dbReference>
<dbReference type="PANTHER" id="PTHR30478:SF0">
    <property type="entry name" value="BETA SLIDING CLAMP"/>
    <property type="match status" value="1"/>
</dbReference>
<dbReference type="PANTHER" id="PTHR30478">
    <property type="entry name" value="DNA POLYMERASE III SUBUNIT BETA"/>
    <property type="match status" value="1"/>
</dbReference>
<dbReference type="Pfam" id="PF00712">
    <property type="entry name" value="DNA_pol3_beta"/>
    <property type="match status" value="1"/>
</dbReference>
<dbReference type="Pfam" id="PF02767">
    <property type="entry name" value="DNA_pol3_beta_2"/>
    <property type="match status" value="1"/>
</dbReference>
<dbReference type="Pfam" id="PF02768">
    <property type="entry name" value="DNA_pol3_beta_3"/>
    <property type="match status" value="1"/>
</dbReference>
<dbReference type="PIRSF" id="PIRSF000804">
    <property type="entry name" value="DNA_pol_III_b"/>
    <property type="match status" value="1"/>
</dbReference>
<dbReference type="SMART" id="SM00480">
    <property type="entry name" value="POL3Bc"/>
    <property type="match status" value="1"/>
</dbReference>
<dbReference type="SUPFAM" id="SSF55979">
    <property type="entry name" value="DNA clamp"/>
    <property type="match status" value="3"/>
</dbReference>